<evidence type="ECO:0000255" key="1">
    <source>
        <dbReference type="HAMAP-Rule" id="MF_00267"/>
    </source>
</evidence>
<sequence length="211" mass="23672">MRDDRIFIKGNKLGINAIINMDKFGNFDEMLDSLVEKLSRGKKFYKGATLTVTTDLKYINERQISKLKDVLFDEILIKDCIFEERLEKQSSVFSGVYEGRTKFVRKTVRSGQCLNYAGNLIIIGDVNNGGEVRAHGNVIVLGDLKGKVFAGDNGNENAIIAAYSLEPELISISGKITISPDDFEKTGYPEVARLNENNIIVEPYLPDKYSY</sequence>
<feature type="chain" id="PRO_0000189030" description="Probable septum site-determining protein MinC">
    <location>
        <begin position="1"/>
        <end position="211"/>
    </location>
</feature>
<dbReference type="EMBL" id="BA000016">
    <property type="protein sequence ID" value="BAB81845.1"/>
    <property type="molecule type" value="Genomic_DNA"/>
</dbReference>
<dbReference type="RefSeq" id="WP_003452463.1">
    <property type="nucleotide sequence ID" value="NC_003366.1"/>
</dbReference>
<dbReference type="SMR" id="Q8XII0"/>
<dbReference type="STRING" id="195102.gene:10491409"/>
<dbReference type="GeneID" id="93001327"/>
<dbReference type="KEGG" id="cpe:CPE2139"/>
<dbReference type="HOGENOM" id="CLU_048711_2_0_9"/>
<dbReference type="Proteomes" id="UP000000818">
    <property type="component" value="Chromosome"/>
</dbReference>
<dbReference type="GO" id="GO:0000902">
    <property type="term" value="P:cell morphogenesis"/>
    <property type="evidence" value="ECO:0007669"/>
    <property type="project" value="InterPro"/>
</dbReference>
<dbReference type="GO" id="GO:0000917">
    <property type="term" value="P:division septum assembly"/>
    <property type="evidence" value="ECO:0007669"/>
    <property type="project" value="UniProtKB-KW"/>
</dbReference>
<dbReference type="GO" id="GO:1901891">
    <property type="term" value="P:regulation of cell septum assembly"/>
    <property type="evidence" value="ECO:0007669"/>
    <property type="project" value="InterPro"/>
</dbReference>
<dbReference type="Gene3D" id="2.160.20.70">
    <property type="match status" value="1"/>
</dbReference>
<dbReference type="Gene3D" id="3.30.160.540">
    <property type="match status" value="1"/>
</dbReference>
<dbReference type="HAMAP" id="MF_00267">
    <property type="entry name" value="MinC"/>
    <property type="match status" value="1"/>
</dbReference>
<dbReference type="InterPro" id="IPR016098">
    <property type="entry name" value="CAP/MinC_C"/>
</dbReference>
<dbReference type="InterPro" id="IPR013033">
    <property type="entry name" value="MinC"/>
</dbReference>
<dbReference type="InterPro" id="IPR036145">
    <property type="entry name" value="MinC_C_sf"/>
</dbReference>
<dbReference type="InterPro" id="IPR055219">
    <property type="entry name" value="MinC_N_1"/>
</dbReference>
<dbReference type="InterPro" id="IPR005526">
    <property type="entry name" value="Septum_form_inhib_MinC_C"/>
</dbReference>
<dbReference type="NCBIfam" id="TIGR01222">
    <property type="entry name" value="minC"/>
    <property type="match status" value="1"/>
</dbReference>
<dbReference type="NCBIfam" id="NF001775">
    <property type="entry name" value="PRK00513.1-6"/>
    <property type="match status" value="1"/>
</dbReference>
<dbReference type="PANTHER" id="PTHR34108">
    <property type="entry name" value="SEPTUM SITE-DETERMINING PROTEIN MINC"/>
    <property type="match status" value="1"/>
</dbReference>
<dbReference type="PANTHER" id="PTHR34108:SF1">
    <property type="entry name" value="SEPTUM SITE-DETERMINING PROTEIN MINC"/>
    <property type="match status" value="1"/>
</dbReference>
<dbReference type="Pfam" id="PF03775">
    <property type="entry name" value="MinC_C"/>
    <property type="match status" value="1"/>
</dbReference>
<dbReference type="Pfam" id="PF22642">
    <property type="entry name" value="MinC_N_1"/>
    <property type="match status" value="1"/>
</dbReference>
<dbReference type="SUPFAM" id="SSF63848">
    <property type="entry name" value="Cell-division inhibitor MinC, C-terminal domain"/>
    <property type="match status" value="1"/>
</dbReference>
<keyword id="KW-0131">Cell cycle</keyword>
<keyword id="KW-0132">Cell division</keyword>
<keyword id="KW-1185">Reference proteome</keyword>
<keyword id="KW-0717">Septation</keyword>
<organism>
    <name type="scientific">Clostridium perfringens (strain 13 / Type A)</name>
    <dbReference type="NCBI Taxonomy" id="195102"/>
    <lineage>
        <taxon>Bacteria</taxon>
        <taxon>Bacillati</taxon>
        <taxon>Bacillota</taxon>
        <taxon>Clostridia</taxon>
        <taxon>Eubacteriales</taxon>
        <taxon>Clostridiaceae</taxon>
        <taxon>Clostridium</taxon>
    </lineage>
</organism>
<proteinExistence type="inferred from homology"/>
<name>MINC_CLOPE</name>
<reference key="1">
    <citation type="journal article" date="2002" name="Proc. Natl. Acad. Sci. U.S.A.">
        <title>Complete genome sequence of Clostridium perfringens, an anaerobic flesh-eater.</title>
        <authorList>
            <person name="Shimizu T."/>
            <person name="Ohtani K."/>
            <person name="Hirakawa H."/>
            <person name="Ohshima K."/>
            <person name="Yamashita A."/>
            <person name="Shiba T."/>
            <person name="Ogasawara N."/>
            <person name="Hattori M."/>
            <person name="Kuhara S."/>
            <person name="Hayashi H."/>
        </authorList>
    </citation>
    <scope>NUCLEOTIDE SEQUENCE [LARGE SCALE GENOMIC DNA]</scope>
    <source>
        <strain>13 / Type A</strain>
    </source>
</reference>
<gene>
    <name evidence="1" type="primary">minC</name>
    <name type="ordered locus">CPE2139</name>
</gene>
<comment type="function">
    <text evidence="1">Cell division inhibitor that blocks the formation of polar Z ring septums. Rapidly oscillates between the poles of the cell to destabilize FtsZ filaments that have formed before they mature into polar Z rings. Prevents FtsZ polymerization.</text>
</comment>
<comment type="subunit">
    <text evidence="1">Interacts with MinD and FtsZ.</text>
</comment>
<comment type="similarity">
    <text evidence="1">Belongs to the MinC family.</text>
</comment>
<accession>Q8XII0</accession>
<protein>
    <recommendedName>
        <fullName evidence="1">Probable septum site-determining protein MinC</fullName>
    </recommendedName>
</protein>